<sequence length="217" mass="24368">MKIVIADDHAVVRTGFSMILNYQNDMEVVATAADGVEAYQKVMEYKPDVLLMDLSMPPGESGLIATSKIADSFPETKILILTMFDDEEYLFHVLRNGAKGYILKNAPDEQLLLAIRTVYKGETYVDMKLTTSLVNEFVSNSNQDTANTTDPFKILSKRELEILPLIAKGYGNKEIAEKLFVSVKTVEAHKTHIMTKLGLKSKPELVEYALKKKLLEF</sequence>
<reference key="1">
    <citation type="journal article" date="2006" name="Lancet">
        <title>Complete genome sequence of USA300, an epidemic clone of community-acquired meticillin-resistant Staphylococcus aureus.</title>
        <authorList>
            <person name="Diep B.A."/>
            <person name="Gill S.R."/>
            <person name="Chang R.F."/>
            <person name="Phan T.H."/>
            <person name="Chen J.H."/>
            <person name="Davidson M.G."/>
            <person name="Lin F."/>
            <person name="Lin J."/>
            <person name="Carleton H.A."/>
            <person name="Mongodin E.F."/>
            <person name="Sensabaugh G.F."/>
            <person name="Perdreau-Remington F."/>
        </authorList>
    </citation>
    <scope>NUCLEOTIDE SEQUENCE [LARGE SCALE GENOMIC DNA]</scope>
    <source>
        <strain>USA300</strain>
    </source>
</reference>
<protein>
    <recommendedName>
        <fullName>Oxygen regulatory protein NreC</fullName>
    </recommendedName>
    <alternativeName>
        <fullName>Nitrogen regulation protein C</fullName>
    </alternativeName>
</protein>
<keyword id="KW-0010">Activator</keyword>
<keyword id="KW-0963">Cytoplasm</keyword>
<keyword id="KW-0238">DNA-binding</keyword>
<keyword id="KW-0597">Phosphoprotein</keyword>
<keyword id="KW-0804">Transcription</keyword>
<keyword id="KW-0805">Transcription regulation</keyword>
<keyword id="KW-0902">Two-component regulatory system</keyword>
<feature type="chain" id="PRO_0000349355" description="Oxygen regulatory protein NreC">
    <location>
        <begin position="1"/>
        <end position="217"/>
    </location>
</feature>
<feature type="domain" description="Response regulatory" evidence="2">
    <location>
        <begin position="2"/>
        <end position="119"/>
    </location>
</feature>
<feature type="domain" description="HTH luxR-type" evidence="3">
    <location>
        <begin position="148"/>
        <end position="213"/>
    </location>
</feature>
<feature type="DNA-binding region" description="H-T-H motif" evidence="3">
    <location>
        <begin position="172"/>
        <end position="191"/>
    </location>
</feature>
<feature type="modified residue" description="4-aspartylphosphate" evidence="2">
    <location>
        <position position="53"/>
    </location>
</feature>
<dbReference type="EMBL" id="CP000255">
    <property type="protein sequence ID" value="ABD22829.1"/>
    <property type="molecule type" value="Genomic_DNA"/>
</dbReference>
<dbReference type="RefSeq" id="WP_000706315.1">
    <property type="nucleotide sequence ID" value="NZ_CP027476.1"/>
</dbReference>
<dbReference type="SMR" id="Q2FEA6"/>
<dbReference type="KEGG" id="saa:SAUSA300_2337"/>
<dbReference type="HOGENOM" id="CLU_000445_90_1_9"/>
<dbReference type="OMA" id="VYAMREK"/>
<dbReference type="Proteomes" id="UP000001939">
    <property type="component" value="Chromosome"/>
</dbReference>
<dbReference type="GO" id="GO:0005737">
    <property type="term" value="C:cytoplasm"/>
    <property type="evidence" value="ECO:0007669"/>
    <property type="project" value="UniProtKB-SubCell"/>
</dbReference>
<dbReference type="GO" id="GO:0003677">
    <property type="term" value="F:DNA binding"/>
    <property type="evidence" value="ECO:0007669"/>
    <property type="project" value="UniProtKB-KW"/>
</dbReference>
<dbReference type="GO" id="GO:0000160">
    <property type="term" value="P:phosphorelay signal transduction system"/>
    <property type="evidence" value="ECO:0007669"/>
    <property type="project" value="UniProtKB-KW"/>
</dbReference>
<dbReference type="GO" id="GO:0006355">
    <property type="term" value="P:regulation of DNA-templated transcription"/>
    <property type="evidence" value="ECO:0007669"/>
    <property type="project" value="InterPro"/>
</dbReference>
<dbReference type="CDD" id="cd06170">
    <property type="entry name" value="LuxR_C_like"/>
    <property type="match status" value="1"/>
</dbReference>
<dbReference type="CDD" id="cd17535">
    <property type="entry name" value="REC_NarL-like"/>
    <property type="match status" value="1"/>
</dbReference>
<dbReference type="Gene3D" id="3.40.50.2300">
    <property type="match status" value="1"/>
</dbReference>
<dbReference type="InterPro" id="IPR011006">
    <property type="entry name" value="CheY-like_superfamily"/>
</dbReference>
<dbReference type="InterPro" id="IPR016032">
    <property type="entry name" value="Sig_transdc_resp-reg_C-effctor"/>
</dbReference>
<dbReference type="InterPro" id="IPR001789">
    <property type="entry name" value="Sig_transdc_resp-reg_receiver"/>
</dbReference>
<dbReference type="InterPro" id="IPR000792">
    <property type="entry name" value="Tscrpt_reg_LuxR_C"/>
</dbReference>
<dbReference type="InterPro" id="IPR039420">
    <property type="entry name" value="WalR-like"/>
</dbReference>
<dbReference type="PANTHER" id="PTHR43214:SF37">
    <property type="entry name" value="TRANSCRIPTIONAL REGULATORY PROTEIN YDFI"/>
    <property type="match status" value="1"/>
</dbReference>
<dbReference type="PANTHER" id="PTHR43214">
    <property type="entry name" value="TWO-COMPONENT RESPONSE REGULATOR"/>
    <property type="match status" value="1"/>
</dbReference>
<dbReference type="Pfam" id="PF00196">
    <property type="entry name" value="GerE"/>
    <property type="match status" value="1"/>
</dbReference>
<dbReference type="Pfam" id="PF00072">
    <property type="entry name" value="Response_reg"/>
    <property type="match status" value="1"/>
</dbReference>
<dbReference type="PRINTS" id="PR00038">
    <property type="entry name" value="HTHLUXR"/>
</dbReference>
<dbReference type="SMART" id="SM00421">
    <property type="entry name" value="HTH_LUXR"/>
    <property type="match status" value="1"/>
</dbReference>
<dbReference type="SMART" id="SM00448">
    <property type="entry name" value="REC"/>
    <property type="match status" value="1"/>
</dbReference>
<dbReference type="SUPFAM" id="SSF46894">
    <property type="entry name" value="C-terminal effector domain of the bipartite response regulators"/>
    <property type="match status" value="1"/>
</dbReference>
<dbReference type="SUPFAM" id="SSF52172">
    <property type="entry name" value="CheY-like"/>
    <property type="match status" value="1"/>
</dbReference>
<dbReference type="PROSITE" id="PS00622">
    <property type="entry name" value="HTH_LUXR_1"/>
    <property type="match status" value="1"/>
</dbReference>
<dbReference type="PROSITE" id="PS50043">
    <property type="entry name" value="HTH_LUXR_2"/>
    <property type="match status" value="1"/>
</dbReference>
<dbReference type="PROSITE" id="PS50110">
    <property type="entry name" value="RESPONSE_REGULATORY"/>
    <property type="match status" value="1"/>
</dbReference>
<accession>Q2FEA6</accession>
<evidence type="ECO:0000250" key="1"/>
<evidence type="ECO:0000255" key="2">
    <source>
        <dbReference type="PROSITE-ProRule" id="PRU00169"/>
    </source>
</evidence>
<evidence type="ECO:0000255" key="3">
    <source>
        <dbReference type="PROSITE-ProRule" id="PRU00411"/>
    </source>
</evidence>
<evidence type="ECO:0000305" key="4"/>
<proteinExistence type="inferred from homology"/>
<name>NREC_STAA3</name>
<comment type="function">
    <text evidence="1">Member of the two-component regulatory system NreB/NreC involved in the control of dissimilatory nitrate/nitrite reduction in response to oxygen. Phosphorylated NreC binds to a GC-rich palindromic sequence at the promoters of the nitrate (narGHJI) and nitrite (nir) reductase operons, as well as the putative nitrate transporter gene narT, and activates their expression (By similarity).</text>
</comment>
<comment type="subcellular location">
    <subcellularLocation>
        <location evidence="4">Cytoplasm</location>
    </subcellularLocation>
</comment>
<comment type="PTM">
    <text evidence="1">Phosphorylated by NreB.</text>
</comment>
<gene>
    <name type="primary">nreC</name>
    <name type="ordered locus">SAUSA300_2337</name>
</gene>
<organism>
    <name type="scientific">Staphylococcus aureus (strain USA300)</name>
    <dbReference type="NCBI Taxonomy" id="367830"/>
    <lineage>
        <taxon>Bacteria</taxon>
        <taxon>Bacillati</taxon>
        <taxon>Bacillota</taxon>
        <taxon>Bacilli</taxon>
        <taxon>Bacillales</taxon>
        <taxon>Staphylococcaceae</taxon>
        <taxon>Staphylococcus</taxon>
    </lineage>
</organism>